<evidence type="ECO:0000255" key="1">
    <source>
        <dbReference type="HAMAP-Rule" id="MF_00520"/>
    </source>
</evidence>
<feature type="chain" id="PRO_1000081681" description="Ribulokinase">
    <location>
        <begin position="1"/>
        <end position="569"/>
    </location>
</feature>
<proteinExistence type="inferred from homology"/>
<comment type="catalytic activity">
    <reaction evidence="1">
        <text>D-ribulose + ATP = D-ribulose 5-phosphate + ADP + H(+)</text>
        <dbReference type="Rhea" id="RHEA:17601"/>
        <dbReference type="ChEBI" id="CHEBI:15378"/>
        <dbReference type="ChEBI" id="CHEBI:17173"/>
        <dbReference type="ChEBI" id="CHEBI:30616"/>
        <dbReference type="ChEBI" id="CHEBI:58121"/>
        <dbReference type="ChEBI" id="CHEBI:456216"/>
        <dbReference type="EC" id="2.7.1.16"/>
    </reaction>
</comment>
<comment type="catalytic activity">
    <reaction evidence="1">
        <text>L-ribulose + ATP = L-ribulose 5-phosphate + ADP + H(+)</text>
        <dbReference type="Rhea" id="RHEA:22072"/>
        <dbReference type="ChEBI" id="CHEBI:15378"/>
        <dbReference type="ChEBI" id="CHEBI:16880"/>
        <dbReference type="ChEBI" id="CHEBI:30616"/>
        <dbReference type="ChEBI" id="CHEBI:58226"/>
        <dbReference type="ChEBI" id="CHEBI:456216"/>
        <dbReference type="EC" id="2.7.1.16"/>
    </reaction>
</comment>
<comment type="pathway">
    <text evidence="1">Carbohydrate degradation; L-arabinose degradation via L-ribulose; D-xylulose 5-phosphate from L-arabinose (bacterial route): step 2/3.</text>
</comment>
<comment type="similarity">
    <text evidence="1">Belongs to the ribulokinase family.</text>
</comment>
<keyword id="KW-0054">Arabinose catabolism</keyword>
<keyword id="KW-0067">ATP-binding</keyword>
<keyword id="KW-0119">Carbohydrate metabolism</keyword>
<keyword id="KW-0418">Kinase</keyword>
<keyword id="KW-0547">Nucleotide-binding</keyword>
<keyword id="KW-1185">Reference proteome</keyword>
<keyword id="KW-0808">Transferase</keyword>
<gene>
    <name evidence="1" type="primary">araB</name>
    <name type="ordered locus">SARI_02902</name>
</gene>
<sequence>MAIAIGLDFGSDSVRALAVDCATGGEIATSVEWYPRWQEGRYCDGPNNQFRHHPRDYMESMEIALKRVLAELSAAQRANVIGIGVDSTGSTPAPIDADGNVLALRPEFAENPNAMFVLWKDHTAVEEADEITRLCHMPGKVDYSRYIGGVYSSEWFWAKILHITREDSAVAQAAVSWVELCDWVPALLSGTTRPQDIRRGRCSAGHKSLWHESWGGLPPASFFDELDPCINRHLRYPLFSETFTADLPVGTLCAEWAQRLGLPESVVISGGAFDCHMGAVGAGAQPNTLVKVIGTSTCDILIADKQSVGDRAVKGICGQVDGSVVPNFIGLEAGQSAFGDIYAWFGRVLSWPLAQLAARHPELKDQINASQKQLLPALTDAWAKNPSLAHLPVVLDWFNGRRTPNANQRLKGIITDLNLATDAPALFGGLIAATAFGARAIMECFTEQGIPVNNVMALGGIARKNQVIMQVCCDVLNRPLQIVASDQCCALGAAIFAAVAAKVHADIPAAQQNMASAVERTLHPRPEQAQRFEQLYRRYQQWALSAEQHYLTTATPALTTPVNQAILTH</sequence>
<reference key="1">
    <citation type="submission" date="2007-11" db="EMBL/GenBank/DDBJ databases">
        <authorList>
            <consortium name="The Salmonella enterica serovar Arizonae Genome Sequencing Project"/>
            <person name="McClelland M."/>
            <person name="Sanderson E.K."/>
            <person name="Porwollik S."/>
            <person name="Spieth J."/>
            <person name="Clifton W.S."/>
            <person name="Fulton R."/>
            <person name="Chunyan W."/>
            <person name="Wollam A."/>
            <person name="Shah N."/>
            <person name="Pepin K."/>
            <person name="Bhonagiri V."/>
            <person name="Nash W."/>
            <person name="Johnson M."/>
            <person name="Thiruvilangam P."/>
            <person name="Wilson R."/>
        </authorList>
    </citation>
    <scope>NUCLEOTIDE SEQUENCE [LARGE SCALE GENOMIC DNA]</scope>
    <source>
        <strain>ATCC BAA-731 / CDC346-86 / RSK2980</strain>
    </source>
</reference>
<protein>
    <recommendedName>
        <fullName evidence="1">Ribulokinase</fullName>
        <ecNumber evidence="1">2.7.1.16</ecNumber>
    </recommendedName>
</protein>
<name>ARAB_SALAR</name>
<organism>
    <name type="scientific">Salmonella arizonae (strain ATCC BAA-731 / CDC346-86 / RSK2980)</name>
    <dbReference type="NCBI Taxonomy" id="41514"/>
    <lineage>
        <taxon>Bacteria</taxon>
        <taxon>Pseudomonadati</taxon>
        <taxon>Pseudomonadota</taxon>
        <taxon>Gammaproteobacteria</taxon>
        <taxon>Enterobacterales</taxon>
        <taxon>Enterobacteriaceae</taxon>
        <taxon>Salmonella</taxon>
    </lineage>
</organism>
<dbReference type="EC" id="2.7.1.16" evidence="1"/>
<dbReference type="EMBL" id="CP000880">
    <property type="protein sequence ID" value="ABX22748.1"/>
    <property type="molecule type" value="Genomic_DNA"/>
</dbReference>
<dbReference type="SMR" id="A9MQF0"/>
<dbReference type="STRING" id="41514.SARI_02902"/>
<dbReference type="KEGG" id="ses:SARI_02902"/>
<dbReference type="HOGENOM" id="CLU_009281_9_1_6"/>
<dbReference type="UniPathway" id="UPA00145">
    <property type="reaction ID" value="UER00566"/>
</dbReference>
<dbReference type="Proteomes" id="UP000002084">
    <property type="component" value="Chromosome"/>
</dbReference>
<dbReference type="GO" id="GO:0005737">
    <property type="term" value="C:cytoplasm"/>
    <property type="evidence" value="ECO:0007669"/>
    <property type="project" value="TreeGrafter"/>
</dbReference>
<dbReference type="GO" id="GO:0005524">
    <property type="term" value="F:ATP binding"/>
    <property type="evidence" value="ECO:0007669"/>
    <property type="project" value="UniProtKB-KW"/>
</dbReference>
<dbReference type="GO" id="GO:0019150">
    <property type="term" value="F:D-ribulokinase activity"/>
    <property type="evidence" value="ECO:0007669"/>
    <property type="project" value="RHEA"/>
</dbReference>
<dbReference type="GO" id="GO:0008741">
    <property type="term" value="F:ribulokinase activity"/>
    <property type="evidence" value="ECO:0007669"/>
    <property type="project" value="UniProtKB-UniRule"/>
</dbReference>
<dbReference type="GO" id="GO:0019569">
    <property type="term" value="P:L-arabinose catabolic process to xylulose 5-phosphate"/>
    <property type="evidence" value="ECO:0007669"/>
    <property type="project" value="UniProtKB-UniRule"/>
</dbReference>
<dbReference type="CDD" id="cd07781">
    <property type="entry name" value="ASKHA_NBD_FGGY_L-RBK"/>
    <property type="match status" value="1"/>
</dbReference>
<dbReference type="Gene3D" id="1.20.58.2240">
    <property type="match status" value="1"/>
</dbReference>
<dbReference type="Gene3D" id="3.30.420.40">
    <property type="match status" value="1"/>
</dbReference>
<dbReference type="HAMAP" id="MF_00520">
    <property type="entry name" value="Ribulokinase"/>
    <property type="match status" value="1"/>
</dbReference>
<dbReference type="InterPro" id="IPR043129">
    <property type="entry name" value="ATPase_NBD"/>
</dbReference>
<dbReference type="InterPro" id="IPR018485">
    <property type="entry name" value="FGGY_C"/>
</dbReference>
<dbReference type="InterPro" id="IPR005929">
    <property type="entry name" value="Ribulokinase"/>
</dbReference>
<dbReference type="NCBIfam" id="TIGR01234">
    <property type="entry name" value="L-ribulokinase"/>
    <property type="match status" value="1"/>
</dbReference>
<dbReference type="NCBIfam" id="NF003154">
    <property type="entry name" value="PRK04123.1"/>
    <property type="match status" value="1"/>
</dbReference>
<dbReference type="PANTHER" id="PTHR43435:SF4">
    <property type="entry name" value="FGGY CARBOHYDRATE KINASE DOMAIN-CONTAINING PROTEIN"/>
    <property type="match status" value="1"/>
</dbReference>
<dbReference type="PANTHER" id="PTHR43435">
    <property type="entry name" value="RIBULOKINASE"/>
    <property type="match status" value="1"/>
</dbReference>
<dbReference type="Pfam" id="PF02782">
    <property type="entry name" value="FGGY_C"/>
    <property type="match status" value="1"/>
</dbReference>
<dbReference type="SUPFAM" id="SSF53067">
    <property type="entry name" value="Actin-like ATPase domain"/>
    <property type="match status" value="2"/>
</dbReference>
<accession>A9MQF0</accession>